<evidence type="ECO:0000255" key="1">
    <source>
        <dbReference type="HAMAP-Rule" id="MF_00453"/>
    </source>
</evidence>
<sequence length="529" mass="58795">MSLTQTPLLQDLGIQNATLHHNPGVDELYAAALRRGEGKQAATGPLVVHTDKTGRSPKDRFIVEDDLTRDTVWWGGFNTPISPVVFDRLLDKMTHYAEGRELFVQDVFAGTDPQYRIAVRVITEMAYHSLFVRNMFVRPTAEELEHFQPDWTVLNIPSFKADPERDGVRSETFILVNFTRKMILVGGTQYAGENKKGIFGVLNYLLPQRGVMPMHCSANMGEDGDVALFFGLSGTGKTTLSADPSRRLIGDDEHGWTDTGVFNFEGGCYAKVIHLNPEAEPAIYRTTQTYGTVLENVVLKPDGTPDLNDGSLTENTRSAYPITQIDNIVPEGRGGHPKNIVFLTADAFGVLPPLSRLTPEQTMYQFISGFTAKIPGTEQGVTEPQPTFSTCFGAPFMPRHPGEYARLLAQKVRESGANVWLVNTGWTGGQYGEGQRMSIQHTRTLINAALSGQLDNVKFEREPFFGLEIPTEVPGVPKEVLNPREAWADKAAYDRTARKLARMFRENFKRFEDGVDPAITASMPEHREA</sequence>
<protein>
    <recommendedName>
        <fullName evidence="1">Phosphoenolpyruvate carboxykinase (ATP)</fullName>
        <shortName evidence="1">PCK</shortName>
        <shortName evidence="1">PEP carboxykinase</shortName>
        <shortName evidence="1">PEPCK</shortName>
        <ecNumber evidence="1">4.1.1.49</ecNumber>
    </recommendedName>
</protein>
<reference key="1">
    <citation type="submission" date="2006-04" db="EMBL/GenBank/DDBJ databases">
        <title>Complete sequence of chromosome of Deinococcus geothermalis DSM 11300.</title>
        <authorList>
            <person name="Copeland A."/>
            <person name="Lucas S."/>
            <person name="Lapidus A."/>
            <person name="Barry K."/>
            <person name="Detter J.C."/>
            <person name="Glavina del Rio T."/>
            <person name="Hammon N."/>
            <person name="Israni S."/>
            <person name="Dalin E."/>
            <person name="Tice H."/>
            <person name="Pitluck S."/>
            <person name="Brettin T."/>
            <person name="Bruce D."/>
            <person name="Han C."/>
            <person name="Tapia R."/>
            <person name="Saunders E."/>
            <person name="Gilna P."/>
            <person name="Schmutz J."/>
            <person name="Larimer F."/>
            <person name="Land M."/>
            <person name="Hauser L."/>
            <person name="Kyrpides N."/>
            <person name="Kim E."/>
            <person name="Daly M.J."/>
            <person name="Fredrickson J.K."/>
            <person name="Makarova K.S."/>
            <person name="Gaidamakova E.K."/>
            <person name="Zhai M."/>
            <person name="Richardson P."/>
        </authorList>
    </citation>
    <scope>NUCLEOTIDE SEQUENCE [LARGE SCALE GENOMIC DNA]</scope>
    <source>
        <strain>DSM 11300 / CIP 105573 / AG-3a</strain>
    </source>
</reference>
<dbReference type="EC" id="4.1.1.49" evidence="1"/>
<dbReference type="EMBL" id="CP000359">
    <property type="protein sequence ID" value="ABF45493.1"/>
    <property type="molecule type" value="Genomic_DNA"/>
</dbReference>
<dbReference type="RefSeq" id="WP_011530330.1">
    <property type="nucleotide sequence ID" value="NC_008025.1"/>
</dbReference>
<dbReference type="SMR" id="Q1IZ41"/>
<dbReference type="STRING" id="319795.Dgeo_1196"/>
<dbReference type="KEGG" id="dge:Dgeo_1196"/>
<dbReference type="eggNOG" id="COG1866">
    <property type="taxonomic scope" value="Bacteria"/>
</dbReference>
<dbReference type="HOGENOM" id="CLU_018247_0_1_0"/>
<dbReference type="UniPathway" id="UPA00138"/>
<dbReference type="Proteomes" id="UP000002431">
    <property type="component" value="Chromosome"/>
</dbReference>
<dbReference type="GO" id="GO:0005829">
    <property type="term" value="C:cytosol"/>
    <property type="evidence" value="ECO:0007669"/>
    <property type="project" value="TreeGrafter"/>
</dbReference>
<dbReference type="GO" id="GO:0005524">
    <property type="term" value="F:ATP binding"/>
    <property type="evidence" value="ECO:0007669"/>
    <property type="project" value="UniProtKB-UniRule"/>
</dbReference>
<dbReference type="GO" id="GO:0046872">
    <property type="term" value="F:metal ion binding"/>
    <property type="evidence" value="ECO:0007669"/>
    <property type="project" value="UniProtKB-KW"/>
</dbReference>
<dbReference type="GO" id="GO:0004612">
    <property type="term" value="F:phosphoenolpyruvate carboxykinase (ATP) activity"/>
    <property type="evidence" value="ECO:0007669"/>
    <property type="project" value="UniProtKB-UniRule"/>
</dbReference>
<dbReference type="GO" id="GO:0006094">
    <property type="term" value="P:gluconeogenesis"/>
    <property type="evidence" value="ECO:0007669"/>
    <property type="project" value="UniProtKB-UniRule"/>
</dbReference>
<dbReference type="CDD" id="cd00484">
    <property type="entry name" value="PEPCK_ATP"/>
    <property type="match status" value="1"/>
</dbReference>
<dbReference type="Gene3D" id="3.90.228.20">
    <property type="match status" value="1"/>
</dbReference>
<dbReference type="Gene3D" id="3.40.449.10">
    <property type="entry name" value="Phosphoenolpyruvate Carboxykinase, domain 1"/>
    <property type="match status" value="1"/>
</dbReference>
<dbReference type="Gene3D" id="2.170.8.10">
    <property type="entry name" value="Phosphoenolpyruvate Carboxykinase, domain 2"/>
    <property type="match status" value="1"/>
</dbReference>
<dbReference type="HAMAP" id="MF_00453">
    <property type="entry name" value="PEPCK_ATP"/>
    <property type="match status" value="1"/>
</dbReference>
<dbReference type="InterPro" id="IPR001272">
    <property type="entry name" value="PEP_carboxykinase_ATP"/>
</dbReference>
<dbReference type="InterPro" id="IPR013035">
    <property type="entry name" value="PEP_carboxykinase_C"/>
</dbReference>
<dbReference type="InterPro" id="IPR008210">
    <property type="entry name" value="PEP_carboxykinase_N"/>
</dbReference>
<dbReference type="InterPro" id="IPR015994">
    <property type="entry name" value="PEPCK_ATP_CS"/>
</dbReference>
<dbReference type="NCBIfam" id="TIGR00224">
    <property type="entry name" value="pckA"/>
    <property type="match status" value="1"/>
</dbReference>
<dbReference type="NCBIfam" id="NF006820">
    <property type="entry name" value="PRK09344.1-2"/>
    <property type="match status" value="1"/>
</dbReference>
<dbReference type="NCBIfam" id="NF006821">
    <property type="entry name" value="PRK09344.1-3"/>
    <property type="match status" value="1"/>
</dbReference>
<dbReference type="NCBIfam" id="NF006822">
    <property type="entry name" value="PRK09344.1-4"/>
    <property type="match status" value="1"/>
</dbReference>
<dbReference type="PANTHER" id="PTHR30031:SF0">
    <property type="entry name" value="PHOSPHOENOLPYRUVATE CARBOXYKINASE (ATP)"/>
    <property type="match status" value="1"/>
</dbReference>
<dbReference type="PANTHER" id="PTHR30031">
    <property type="entry name" value="PHOSPHOENOLPYRUVATE CARBOXYKINASE ATP"/>
    <property type="match status" value="1"/>
</dbReference>
<dbReference type="Pfam" id="PF01293">
    <property type="entry name" value="PEPCK_ATP"/>
    <property type="match status" value="1"/>
</dbReference>
<dbReference type="PIRSF" id="PIRSF006294">
    <property type="entry name" value="PEP_crbxkin"/>
    <property type="match status" value="1"/>
</dbReference>
<dbReference type="SUPFAM" id="SSF68923">
    <property type="entry name" value="PEP carboxykinase N-terminal domain"/>
    <property type="match status" value="1"/>
</dbReference>
<dbReference type="SUPFAM" id="SSF53795">
    <property type="entry name" value="PEP carboxykinase-like"/>
    <property type="match status" value="1"/>
</dbReference>
<dbReference type="PROSITE" id="PS00532">
    <property type="entry name" value="PEPCK_ATP"/>
    <property type="match status" value="1"/>
</dbReference>
<keyword id="KW-0067">ATP-binding</keyword>
<keyword id="KW-0963">Cytoplasm</keyword>
<keyword id="KW-0210">Decarboxylase</keyword>
<keyword id="KW-0312">Gluconeogenesis</keyword>
<keyword id="KW-0456">Lyase</keyword>
<keyword id="KW-0464">Manganese</keyword>
<keyword id="KW-0479">Metal-binding</keyword>
<keyword id="KW-0547">Nucleotide-binding</keyword>
<feature type="chain" id="PRO_1000026322" description="Phosphoenolpyruvate carboxykinase (ATP)">
    <location>
        <begin position="1"/>
        <end position="529"/>
    </location>
</feature>
<feature type="binding site" evidence="1">
    <location>
        <position position="55"/>
    </location>
    <ligand>
        <name>substrate</name>
    </ligand>
</feature>
<feature type="binding site" evidence="1">
    <location>
        <position position="190"/>
    </location>
    <ligand>
        <name>substrate</name>
    </ligand>
</feature>
<feature type="binding site" evidence="1">
    <location>
        <position position="196"/>
    </location>
    <ligand>
        <name>ATP</name>
        <dbReference type="ChEBI" id="CHEBI:30616"/>
    </ligand>
</feature>
<feature type="binding site" evidence="1">
    <location>
        <position position="196"/>
    </location>
    <ligand>
        <name>Mn(2+)</name>
        <dbReference type="ChEBI" id="CHEBI:29035"/>
    </ligand>
</feature>
<feature type="binding site" evidence="1">
    <location>
        <position position="196"/>
    </location>
    <ligand>
        <name>substrate</name>
    </ligand>
</feature>
<feature type="binding site" evidence="1">
    <location>
        <position position="215"/>
    </location>
    <ligand>
        <name>ATP</name>
        <dbReference type="ChEBI" id="CHEBI:30616"/>
    </ligand>
</feature>
<feature type="binding site" evidence="1">
    <location>
        <position position="215"/>
    </location>
    <ligand>
        <name>Mn(2+)</name>
        <dbReference type="ChEBI" id="CHEBI:29035"/>
    </ligand>
</feature>
<feature type="binding site" evidence="1">
    <location>
        <begin position="231"/>
        <end position="239"/>
    </location>
    <ligand>
        <name>ATP</name>
        <dbReference type="ChEBI" id="CHEBI:30616"/>
    </ligand>
</feature>
<feature type="binding site" evidence="1">
    <location>
        <position position="252"/>
    </location>
    <ligand>
        <name>Mn(2+)</name>
        <dbReference type="ChEBI" id="CHEBI:29035"/>
    </ligand>
</feature>
<feature type="binding site" evidence="1">
    <location>
        <position position="280"/>
    </location>
    <ligand>
        <name>ATP</name>
        <dbReference type="ChEBI" id="CHEBI:30616"/>
    </ligand>
</feature>
<feature type="binding site" evidence="1">
    <location>
        <position position="317"/>
    </location>
    <ligand>
        <name>ATP</name>
        <dbReference type="ChEBI" id="CHEBI:30616"/>
    </ligand>
</feature>
<feature type="binding site" evidence="1">
    <location>
        <position position="317"/>
    </location>
    <ligand>
        <name>substrate</name>
    </ligand>
</feature>
<feature type="binding site" evidence="1">
    <location>
        <position position="442"/>
    </location>
    <ligand>
        <name>ATP</name>
        <dbReference type="ChEBI" id="CHEBI:30616"/>
    </ligand>
</feature>
<organism>
    <name type="scientific">Deinococcus geothermalis (strain DSM 11300 / CIP 105573 / AG-3a)</name>
    <dbReference type="NCBI Taxonomy" id="319795"/>
    <lineage>
        <taxon>Bacteria</taxon>
        <taxon>Thermotogati</taxon>
        <taxon>Deinococcota</taxon>
        <taxon>Deinococci</taxon>
        <taxon>Deinococcales</taxon>
        <taxon>Deinococcaceae</taxon>
        <taxon>Deinococcus</taxon>
    </lineage>
</organism>
<gene>
    <name evidence="1" type="primary">pckA</name>
    <name type="ordered locus">Dgeo_1196</name>
</gene>
<comment type="function">
    <text evidence="1">Involved in the gluconeogenesis. Catalyzes the conversion of oxaloacetate (OAA) to phosphoenolpyruvate (PEP) through direct phosphoryl transfer between the nucleoside triphosphate and OAA.</text>
</comment>
<comment type="catalytic activity">
    <reaction evidence="1">
        <text>oxaloacetate + ATP = phosphoenolpyruvate + ADP + CO2</text>
        <dbReference type="Rhea" id="RHEA:18617"/>
        <dbReference type="ChEBI" id="CHEBI:16452"/>
        <dbReference type="ChEBI" id="CHEBI:16526"/>
        <dbReference type="ChEBI" id="CHEBI:30616"/>
        <dbReference type="ChEBI" id="CHEBI:58702"/>
        <dbReference type="ChEBI" id="CHEBI:456216"/>
        <dbReference type="EC" id="4.1.1.49"/>
    </reaction>
</comment>
<comment type="cofactor">
    <cofactor evidence="1">
        <name>Mn(2+)</name>
        <dbReference type="ChEBI" id="CHEBI:29035"/>
    </cofactor>
    <text evidence="1">Binds 1 Mn(2+) ion per subunit.</text>
</comment>
<comment type="pathway">
    <text evidence="1">Carbohydrate biosynthesis; gluconeogenesis.</text>
</comment>
<comment type="subcellular location">
    <subcellularLocation>
        <location evidence="1">Cytoplasm</location>
    </subcellularLocation>
</comment>
<comment type="similarity">
    <text evidence="1">Belongs to the phosphoenolpyruvate carboxykinase (ATP) family.</text>
</comment>
<name>PCKA_DEIGD</name>
<proteinExistence type="inferred from homology"/>
<accession>Q1IZ41</accession>